<reference key="1">
    <citation type="journal article" date="2009" name="J. Bacteriol.">
        <title>Complete genome sequence and comparative genome analysis of enteropathogenic Escherichia coli O127:H6 strain E2348/69.</title>
        <authorList>
            <person name="Iguchi A."/>
            <person name="Thomson N.R."/>
            <person name="Ogura Y."/>
            <person name="Saunders D."/>
            <person name="Ooka T."/>
            <person name="Henderson I.R."/>
            <person name="Harris D."/>
            <person name="Asadulghani M."/>
            <person name="Kurokawa K."/>
            <person name="Dean P."/>
            <person name="Kenny B."/>
            <person name="Quail M.A."/>
            <person name="Thurston S."/>
            <person name="Dougan G."/>
            <person name="Hayashi T."/>
            <person name="Parkhill J."/>
            <person name="Frankel G."/>
        </authorList>
    </citation>
    <scope>NUCLEOTIDE SEQUENCE [LARGE SCALE GENOMIC DNA]</scope>
    <source>
        <strain>E2348/69 / EPEC</strain>
    </source>
</reference>
<gene>
    <name type="primary">yqfB</name>
    <name type="ordered locus">E2348C_3153</name>
</gene>
<protein>
    <recommendedName>
        <fullName evidence="2">N(4)-acetylcytidine amidohydrolase</fullName>
        <shortName evidence="2">ac4C amidohydrolase</shortName>
        <ecNumber evidence="2">3.5.1.135</ecNumber>
    </recommendedName>
</protein>
<proteinExistence type="inferred from homology"/>
<accession>B7UHU9</accession>
<name>AC4CH_ECO27</name>
<evidence type="ECO:0000255" key="1"/>
<evidence type="ECO:0000255" key="2">
    <source>
        <dbReference type="HAMAP-Rule" id="MF_00684"/>
    </source>
</evidence>
<sequence>MQPNDITFFQRFQDDILAGRKTITIRDESESHFKTGDVLRVGRFEDDGYFCTIEVTATSTVTLDTLTEKHAKQENMTLTELKKVIADIYPDQTQFYVIEFKCL</sequence>
<keyword id="KW-0378">Hydrolase</keyword>
<keyword id="KW-1185">Reference proteome</keyword>
<organism>
    <name type="scientific">Escherichia coli O127:H6 (strain E2348/69 / EPEC)</name>
    <dbReference type="NCBI Taxonomy" id="574521"/>
    <lineage>
        <taxon>Bacteria</taxon>
        <taxon>Pseudomonadati</taxon>
        <taxon>Pseudomonadota</taxon>
        <taxon>Gammaproteobacteria</taxon>
        <taxon>Enterobacterales</taxon>
        <taxon>Enterobacteriaceae</taxon>
        <taxon>Escherichia</taxon>
    </lineage>
</organism>
<dbReference type="EC" id="3.5.1.135" evidence="2"/>
<dbReference type="EMBL" id="FM180568">
    <property type="protein sequence ID" value="CAS10701.1"/>
    <property type="molecule type" value="Genomic_DNA"/>
</dbReference>
<dbReference type="RefSeq" id="WP_001182959.1">
    <property type="nucleotide sequence ID" value="NC_011601.1"/>
</dbReference>
<dbReference type="SMR" id="B7UHU9"/>
<dbReference type="KEGG" id="ecg:E2348C_3153"/>
<dbReference type="HOGENOM" id="CLU_152586_0_0_6"/>
<dbReference type="Proteomes" id="UP000008205">
    <property type="component" value="Chromosome"/>
</dbReference>
<dbReference type="GO" id="GO:0005829">
    <property type="term" value="C:cytosol"/>
    <property type="evidence" value="ECO:0007669"/>
    <property type="project" value="TreeGrafter"/>
</dbReference>
<dbReference type="GO" id="GO:0016813">
    <property type="term" value="F:hydrolase activity, acting on carbon-nitrogen (but not peptide) bonds, in linear amidines"/>
    <property type="evidence" value="ECO:0007669"/>
    <property type="project" value="UniProtKB-UniRule"/>
</dbReference>
<dbReference type="GO" id="GO:0106251">
    <property type="term" value="F:N4-acetylcytidine amidohydrolase activity"/>
    <property type="evidence" value="ECO:0007669"/>
    <property type="project" value="RHEA"/>
</dbReference>
<dbReference type="CDD" id="cd06552">
    <property type="entry name" value="ASCH_yqfb_like"/>
    <property type="match status" value="1"/>
</dbReference>
<dbReference type="FunFam" id="2.30.130.30:FF:000001">
    <property type="entry name" value="UPF0267 protein YqfB"/>
    <property type="match status" value="1"/>
</dbReference>
<dbReference type="Gene3D" id="2.30.130.30">
    <property type="entry name" value="Hypothetical protein"/>
    <property type="match status" value="1"/>
</dbReference>
<dbReference type="HAMAP" id="MF_00684">
    <property type="entry name" value="ac4C_amidohydr"/>
    <property type="match status" value="1"/>
</dbReference>
<dbReference type="InterPro" id="IPR008314">
    <property type="entry name" value="AC4CH"/>
</dbReference>
<dbReference type="InterPro" id="IPR007374">
    <property type="entry name" value="ASCH_domain"/>
</dbReference>
<dbReference type="InterPro" id="IPR015947">
    <property type="entry name" value="PUA-like_sf"/>
</dbReference>
<dbReference type="NCBIfam" id="NF003443">
    <property type="entry name" value="PRK04980.1"/>
    <property type="match status" value="1"/>
</dbReference>
<dbReference type="PANTHER" id="PTHR38088">
    <property type="entry name" value="UCP029143 FAMILY PROTEIN"/>
    <property type="match status" value="1"/>
</dbReference>
<dbReference type="PANTHER" id="PTHR38088:SF2">
    <property type="entry name" value="UCP029143 FAMILY PROTEIN"/>
    <property type="match status" value="1"/>
</dbReference>
<dbReference type="Pfam" id="PF04266">
    <property type="entry name" value="ASCH"/>
    <property type="match status" value="1"/>
</dbReference>
<dbReference type="PIRSF" id="PIRSF029143">
    <property type="entry name" value="UCP029143"/>
    <property type="match status" value="1"/>
</dbReference>
<dbReference type="SMART" id="SM01022">
    <property type="entry name" value="ASCH"/>
    <property type="match status" value="1"/>
</dbReference>
<dbReference type="SUPFAM" id="SSF88697">
    <property type="entry name" value="PUA domain-like"/>
    <property type="match status" value="1"/>
</dbReference>
<feature type="chain" id="PRO_1000147748" description="N(4)-acetylcytidine amidohydrolase">
    <location>
        <begin position="1"/>
        <end position="103"/>
    </location>
</feature>
<feature type="domain" description="ASCH" evidence="1">
    <location>
        <begin position="6"/>
        <end position="101"/>
    </location>
</feature>
<feature type="active site" description="Proton acceptor" evidence="2">
    <location>
        <position position="21"/>
    </location>
</feature>
<feature type="active site" description="Nucleophile" evidence="2">
    <location>
        <position position="24"/>
    </location>
</feature>
<feature type="active site" description="Proton donor" evidence="2">
    <location>
        <position position="74"/>
    </location>
</feature>
<comment type="function">
    <text evidence="2">Catalyzes the hydrolysis of N(4)-acetylcytidine (ac4C).</text>
</comment>
<comment type="catalytic activity">
    <reaction evidence="2">
        <text>N(4)-acetylcytidine + H2O = cytidine + acetate + H(+)</text>
        <dbReference type="Rhea" id="RHEA:62932"/>
        <dbReference type="ChEBI" id="CHEBI:15377"/>
        <dbReference type="ChEBI" id="CHEBI:15378"/>
        <dbReference type="ChEBI" id="CHEBI:17562"/>
        <dbReference type="ChEBI" id="CHEBI:30089"/>
        <dbReference type="ChEBI" id="CHEBI:70989"/>
        <dbReference type="EC" id="3.5.1.135"/>
    </reaction>
</comment>
<comment type="catalytic activity">
    <reaction evidence="2">
        <text>N(4)-acetyl-2'-deoxycytidine + H2O = 2'-deoxycytidine + acetate + H(+)</text>
        <dbReference type="Rhea" id="RHEA:62936"/>
        <dbReference type="ChEBI" id="CHEBI:15377"/>
        <dbReference type="ChEBI" id="CHEBI:15378"/>
        <dbReference type="ChEBI" id="CHEBI:15698"/>
        <dbReference type="ChEBI" id="CHEBI:30089"/>
        <dbReference type="ChEBI" id="CHEBI:146133"/>
        <dbReference type="EC" id="3.5.1.135"/>
    </reaction>
</comment>
<comment type="catalytic activity">
    <reaction evidence="2">
        <text>N(4)-acetylcytosine + H2O = cytosine + acetate + H(+)</text>
        <dbReference type="Rhea" id="RHEA:62940"/>
        <dbReference type="ChEBI" id="CHEBI:15377"/>
        <dbReference type="ChEBI" id="CHEBI:15378"/>
        <dbReference type="ChEBI" id="CHEBI:16040"/>
        <dbReference type="ChEBI" id="CHEBI:30089"/>
        <dbReference type="ChEBI" id="CHEBI:146134"/>
        <dbReference type="EC" id="3.5.1.135"/>
    </reaction>
</comment>
<comment type="similarity">
    <text evidence="2">Belongs to the N(4)-acetylcytidine amidohydrolase family.</text>
</comment>